<name>PDXA_SALTI</name>
<accession>P58715</accession>
<organism>
    <name type="scientific">Salmonella typhi</name>
    <dbReference type="NCBI Taxonomy" id="90370"/>
    <lineage>
        <taxon>Bacteria</taxon>
        <taxon>Pseudomonadati</taxon>
        <taxon>Pseudomonadota</taxon>
        <taxon>Gammaproteobacteria</taxon>
        <taxon>Enterobacterales</taxon>
        <taxon>Enterobacteriaceae</taxon>
        <taxon>Salmonella</taxon>
    </lineage>
</organism>
<reference key="1">
    <citation type="journal article" date="2001" name="Nature">
        <title>Complete genome sequence of a multiple drug resistant Salmonella enterica serovar Typhi CT18.</title>
        <authorList>
            <person name="Parkhill J."/>
            <person name="Dougan G."/>
            <person name="James K.D."/>
            <person name="Thomson N.R."/>
            <person name="Pickard D."/>
            <person name="Wain J."/>
            <person name="Churcher C.M."/>
            <person name="Mungall K.L."/>
            <person name="Bentley S.D."/>
            <person name="Holden M.T.G."/>
            <person name="Sebaihia M."/>
            <person name="Baker S."/>
            <person name="Basham D."/>
            <person name="Brooks K."/>
            <person name="Chillingworth T."/>
            <person name="Connerton P."/>
            <person name="Cronin A."/>
            <person name="Davis P."/>
            <person name="Davies R.M."/>
            <person name="Dowd L."/>
            <person name="White N."/>
            <person name="Farrar J."/>
            <person name="Feltwell T."/>
            <person name="Hamlin N."/>
            <person name="Haque A."/>
            <person name="Hien T.T."/>
            <person name="Holroyd S."/>
            <person name="Jagels K."/>
            <person name="Krogh A."/>
            <person name="Larsen T.S."/>
            <person name="Leather S."/>
            <person name="Moule S."/>
            <person name="O'Gaora P."/>
            <person name="Parry C."/>
            <person name="Quail M.A."/>
            <person name="Rutherford K.M."/>
            <person name="Simmonds M."/>
            <person name="Skelton J."/>
            <person name="Stevens K."/>
            <person name="Whitehead S."/>
            <person name="Barrell B.G."/>
        </authorList>
    </citation>
    <scope>NUCLEOTIDE SEQUENCE [LARGE SCALE GENOMIC DNA]</scope>
    <source>
        <strain>CT18</strain>
    </source>
</reference>
<reference key="2">
    <citation type="journal article" date="2003" name="J. Bacteriol.">
        <title>Comparative genomics of Salmonella enterica serovar Typhi strains Ty2 and CT18.</title>
        <authorList>
            <person name="Deng W."/>
            <person name="Liou S.-R."/>
            <person name="Plunkett G. III"/>
            <person name="Mayhew G.F."/>
            <person name="Rose D.J."/>
            <person name="Burland V."/>
            <person name="Kodoyianni V."/>
            <person name="Schwartz D.C."/>
            <person name="Blattner F.R."/>
        </authorList>
    </citation>
    <scope>NUCLEOTIDE SEQUENCE [LARGE SCALE GENOMIC DNA]</scope>
    <source>
        <strain>ATCC 700931 / Ty2</strain>
    </source>
</reference>
<gene>
    <name evidence="1" type="primary">pdxA</name>
    <name type="ordered locus">STY0106</name>
    <name type="ordered locus">t0094</name>
</gene>
<keyword id="KW-0170">Cobalt</keyword>
<keyword id="KW-0963">Cytoplasm</keyword>
<keyword id="KW-0460">Magnesium</keyword>
<keyword id="KW-0479">Metal-binding</keyword>
<keyword id="KW-0520">NAD</keyword>
<keyword id="KW-0521">NADP</keyword>
<keyword id="KW-0560">Oxidoreductase</keyword>
<keyword id="KW-0664">Pyridoxine biosynthesis</keyword>
<keyword id="KW-0862">Zinc</keyword>
<protein>
    <recommendedName>
        <fullName evidence="1">4-hydroxythreonine-4-phosphate dehydrogenase</fullName>
        <ecNumber evidence="1">1.1.1.262</ecNumber>
    </recommendedName>
    <alternativeName>
        <fullName evidence="1">4-(phosphohydroxy)-L-threonine dehydrogenase</fullName>
    </alternativeName>
</protein>
<evidence type="ECO:0000255" key="1">
    <source>
        <dbReference type="HAMAP-Rule" id="MF_00536"/>
    </source>
</evidence>
<feature type="chain" id="PRO_0000188825" description="4-hydroxythreonine-4-phosphate dehydrogenase">
    <location>
        <begin position="1"/>
        <end position="329"/>
    </location>
</feature>
<feature type="binding site" evidence="1">
    <location>
        <position position="136"/>
    </location>
    <ligand>
        <name>substrate</name>
    </ligand>
</feature>
<feature type="binding site" evidence="1">
    <location>
        <position position="137"/>
    </location>
    <ligand>
        <name>substrate</name>
    </ligand>
</feature>
<feature type="binding site" evidence="1">
    <location>
        <position position="166"/>
    </location>
    <ligand>
        <name>a divalent metal cation</name>
        <dbReference type="ChEBI" id="CHEBI:60240"/>
        <note>ligand shared between dimeric partners</note>
    </ligand>
</feature>
<feature type="binding site" evidence="1">
    <location>
        <position position="211"/>
    </location>
    <ligand>
        <name>a divalent metal cation</name>
        <dbReference type="ChEBI" id="CHEBI:60240"/>
        <note>ligand shared between dimeric partners</note>
    </ligand>
</feature>
<feature type="binding site" evidence="1">
    <location>
        <position position="266"/>
    </location>
    <ligand>
        <name>a divalent metal cation</name>
        <dbReference type="ChEBI" id="CHEBI:60240"/>
        <note>ligand shared between dimeric partners</note>
    </ligand>
</feature>
<feature type="binding site" evidence="1">
    <location>
        <position position="274"/>
    </location>
    <ligand>
        <name>substrate</name>
    </ligand>
</feature>
<feature type="binding site" evidence="1">
    <location>
        <position position="283"/>
    </location>
    <ligand>
        <name>substrate</name>
    </ligand>
</feature>
<feature type="binding site" evidence="1">
    <location>
        <position position="292"/>
    </location>
    <ligand>
        <name>substrate</name>
    </ligand>
</feature>
<proteinExistence type="inferred from homology"/>
<sequence>MSSAQRVVITPGEPAGIGPDLVVQLAQRAWPIELVVCADGALLTERAAMLGLPLSLLPYSPDVPAAPQPAGTLTLLPVSLRAPAIPGQLTVENGPYVVETLARACDGCLNGEFAALITGPVHKGVINDAGIPFTGHTEFFEERSQAKKVVMMLATEELRVALATTHLPLRAIADAITPALLHEVIAILHHDLRTKFGIAEPRILVCGLNPHAGEGGHMGTEEIDTIIPVLDELRAQGMKLNGPLPADTLFQPKYLDNADAVLAMYHDQGLPVLKYQGFGRGVNITLGLPFIRTSVDHGTALELAGRGKADVGSFITALNLAIKMIVNTQ</sequence>
<dbReference type="EC" id="1.1.1.262" evidence="1"/>
<dbReference type="EMBL" id="AL513382">
    <property type="protein sequence ID" value="CAD01247.1"/>
    <property type="molecule type" value="Genomic_DNA"/>
</dbReference>
<dbReference type="EMBL" id="AE014613">
    <property type="protein sequence ID" value="AAO67827.1"/>
    <property type="molecule type" value="Genomic_DNA"/>
</dbReference>
<dbReference type="RefSeq" id="NP_454703.1">
    <property type="nucleotide sequence ID" value="NC_003198.1"/>
</dbReference>
<dbReference type="RefSeq" id="WP_000093001.1">
    <property type="nucleotide sequence ID" value="NZ_WSUR01000028.1"/>
</dbReference>
<dbReference type="SMR" id="P58715"/>
<dbReference type="STRING" id="220341.gene:17584149"/>
<dbReference type="KEGG" id="stt:t0094"/>
<dbReference type="KEGG" id="sty:STY0106"/>
<dbReference type="PATRIC" id="fig|220341.7.peg.105"/>
<dbReference type="eggNOG" id="COG1995">
    <property type="taxonomic scope" value="Bacteria"/>
</dbReference>
<dbReference type="HOGENOM" id="CLU_040168_1_0_6"/>
<dbReference type="OMA" id="FDIAYQN"/>
<dbReference type="OrthoDB" id="9801783at2"/>
<dbReference type="UniPathway" id="UPA00244">
    <property type="reaction ID" value="UER00312"/>
</dbReference>
<dbReference type="Proteomes" id="UP000000541">
    <property type="component" value="Chromosome"/>
</dbReference>
<dbReference type="Proteomes" id="UP000002670">
    <property type="component" value="Chromosome"/>
</dbReference>
<dbReference type="GO" id="GO:0005737">
    <property type="term" value="C:cytoplasm"/>
    <property type="evidence" value="ECO:0007669"/>
    <property type="project" value="UniProtKB-SubCell"/>
</dbReference>
<dbReference type="GO" id="GO:0050570">
    <property type="term" value="F:4-hydroxythreonine-4-phosphate dehydrogenase activity"/>
    <property type="evidence" value="ECO:0007669"/>
    <property type="project" value="UniProtKB-UniRule"/>
</dbReference>
<dbReference type="GO" id="GO:0050897">
    <property type="term" value="F:cobalt ion binding"/>
    <property type="evidence" value="ECO:0007669"/>
    <property type="project" value="UniProtKB-UniRule"/>
</dbReference>
<dbReference type="GO" id="GO:0000287">
    <property type="term" value="F:magnesium ion binding"/>
    <property type="evidence" value="ECO:0007669"/>
    <property type="project" value="UniProtKB-UniRule"/>
</dbReference>
<dbReference type="GO" id="GO:0051287">
    <property type="term" value="F:NAD binding"/>
    <property type="evidence" value="ECO:0007669"/>
    <property type="project" value="InterPro"/>
</dbReference>
<dbReference type="GO" id="GO:0008270">
    <property type="term" value="F:zinc ion binding"/>
    <property type="evidence" value="ECO:0007669"/>
    <property type="project" value="UniProtKB-UniRule"/>
</dbReference>
<dbReference type="GO" id="GO:0042823">
    <property type="term" value="P:pyridoxal phosphate biosynthetic process"/>
    <property type="evidence" value="ECO:0007669"/>
    <property type="project" value="UniProtKB-UniRule"/>
</dbReference>
<dbReference type="GO" id="GO:0008615">
    <property type="term" value="P:pyridoxine biosynthetic process"/>
    <property type="evidence" value="ECO:0007669"/>
    <property type="project" value="UniProtKB-UniRule"/>
</dbReference>
<dbReference type="FunFam" id="3.40.718.10:FF:000010">
    <property type="entry name" value="4-hydroxythreonine-4-phosphate dehydrogenase"/>
    <property type="match status" value="1"/>
</dbReference>
<dbReference type="Gene3D" id="3.40.718.10">
    <property type="entry name" value="Isopropylmalate Dehydrogenase"/>
    <property type="match status" value="1"/>
</dbReference>
<dbReference type="HAMAP" id="MF_00536">
    <property type="entry name" value="PdxA"/>
    <property type="match status" value="1"/>
</dbReference>
<dbReference type="InterPro" id="IPR037510">
    <property type="entry name" value="PdxA"/>
</dbReference>
<dbReference type="InterPro" id="IPR005255">
    <property type="entry name" value="PdxA_fam"/>
</dbReference>
<dbReference type="NCBIfam" id="TIGR00557">
    <property type="entry name" value="pdxA"/>
    <property type="match status" value="1"/>
</dbReference>
<dbReference type="PANTHER" id="PTHR30004">
    <property type="entry name" value="4-HYDROXYTHREONINE-4-PHOSPHATE DEHYDROGENASE"/>
    <property type="match status" value="1"/>
</dbReference>
<dbReference type="PANTHER" id="PTHR30004:SF5">
    <property type="entry name" value="4-HYDROXYTHREONINE-4-PHOSPHATE DEHYDROGENASE"/>
    <property type="match status" value="1"/>
</dbReference>
<dbReference type="Pfam" id="PF04166">
    <property type="entry name" value="PdxA"/>
    <property type="match status" value="1"/>
</dbReference>
<dbReference type="SUPFAM" id="SSF53659">
    <property type="entry name" value="Isocitrate/Isopropylmalate dehydrogenase-like"/>
    <property type="match status" value="1"/>
</dbReference>
<comment type="function">
    <text evidence="1">Catalyzes the NAD(P)-dependent oxidation of 4-(phosphooxy)-L-threonine (HTP) into 2-amino-3-oxo-4-(phosphooxy)butyric acid which spontaneously decarboxylates to form 3-amino-2-oxopropyl phosphate (AHAP).</text>
</comment>
<comment type="catalytic activity">
    <reaction evidence="1">
        <text>4-(phosphooxy)-L-threonine + NAD(+) = 3-amino-2-oxopropyl phosphate + CO2 + NADH</text>
        <dbReference type="Rhea" id="RHEA:32275"/>
        <dbReference type="ChEBI" id="CHEBI:16526"/>
        <dbReference type="ChEBI" id="CHEBI:57279"/>
        <dbReference type="ChEBI" id="CHEBI:57540"/>
        <dbReference type="ChEBI" id="CHEBI:57945"/>
        <dbReference type="ChEBI" id="CHEBI:58452"/>
        <dbReference type="EC" id="1.1.1.262"/>
    </reaction>
</comment>
<comment type="cofactor">
    <cofactor evidence="1">
        <name>Zn(2+)</name>
        <dbReference type="ChEBI" id="CHEBI:29105"/>
    </cofactor>
    <cofactor evidence="1">
        <name>Mg(2+)</name>
        <dbReference type="ChEBI" id="CHEBI:18420"/>
    </cofactor>
    <cofactor evidence="1">
        <name>Co(2+)</name>
        <dbReference type="ChEBI" id="CHEBI:48828"/>
    </cofactor>
    <text evidence="1">Binds 1 divalent metal cation per subunit. Can use ions such as Zn(2+), Mg(2+) or Co(2+).</text>
</comment>
<comment type="pathway">
    <text evidence="1">Cofactor biosynthesis; pyridoxine 5'-phosphate biosynthesis; pyridoxine 5'-phosphate from D-erythrose 4-phosphate: step 4/5.</text>
</comment>
<comment type="subunit">
    <text evidence="1">Homodimer.</text>
</comment>
<comment type="subcellular location">
    <subcellularLocation>
        <location evidence="1">Cytoplasm</location>
    </subcellularLocation>
</comment>
<comment type="miscellaneous">
    <text evidence="1">The active site is located at the dimer interface.</text>
</comment>
<comment type="similarity">
    <text evidence="1">Belongs to the PdxA family.</text>
</comment>